<dbReference type="EMBL" id="CU329670">
    <property type="protein sequence ID" value="CAA93889.1"/>
    <property type="molecule type" value="Genomic_DNA"/>
</dbReference>
<dbReference type="PIR" id="T38159">
    <property type="entry name" value="T38159"/>
</dbReference>
<dbReference type="RefSeq" id="NP_594828.1">
    <property type="nucleotide sequence ID" value="NM_001020257.2"/>
</dbReference>
<dbReference type="SMR" id="Q10355"/>
<dbReference type="FunCoup" id="Q10355">
    <property type="interactions" value="158"/>
</dbReference>
<dbReference type="STRING" id="284812.Q10355"/>
<dbReference type="iPTMnet" id="Q10355"/>
<dbReference type="PaxDb" id="4896-SPAC22E12.02.1"/>
<dbReference type="EnsemblFungi" id="SPAC22E12.02.1">
    <property type="protein sequence ID" value="SPAC22E12.02.1:pep"/>
    <property type="gene ID" value="SPAC22E12.02"/>
</dbReference>
<dbReference type="KEGG" id="spo:2541753"/>
<dbReference type="PomBase" id="SPAC22E12.02"/>
<dbReference type="VEuPathDB" id="FungiDB:SPAC22E12.02"/>
<dbReference type="eggNOG" id="KOG0226">
    <property type="taxonomic scope" value="Eukaryota"/>
</dbReference>
<dbReference type="HOGENOM" id="CLU_109928_0_0_1"/>
<dbReference type="InParanoid" id="Q10355"/>
<dbReference type="OMA" id="HGNRVQK"/>
<dbReference type="PhylomeDB" id="Q10355"/>
<dbReference type="PRO" id="PR:Q10355"/>
<dbReference type="Proteomes" id="UP000002485">
    <property type="component" value="Chromosome I"/>
</dbReference>
<dbReference type="GO" id="GO:0005634">
    <property type="term" value="C:nucleus"/>
    <property type="evidence" value="ECO:0007005"/>
    <property type="project" value="PomBase"/>
</dbReference>
<dbReference type="GO" id="GO:0046540">
    <property type="term" value="C:U4/U6 x U5 tri-snRNP complex"/>
    <property type="evidence" value="ECO:0000266"/>
    <property type="project" value="PomBase"/>
</dbReference>
<dbReference type="GO" id="GO:0003729">
    <property type="term" value="F:mRNA binding"/>
    <property type="evidence" value="ECO:0000318"/>
    <property type="project" value="GO_Central"/>
</dbReference>
<dbReference type="GO" id="GO:0045292">
    <property type="term" value="P:mRNA cis splicing, via spliceosome"/>
    <property type="evidence" value="ECO:0000250"/>
    <property type="project" value="PomBase"/>
</dbReference>
<dbReference type="CDD" id="cd12383">
    <property type="entry name" value="RRM_RBM42"/>
    <property type="match status" value="1"/>
</dbReference>
<dbReference type="FunFam" id="3.30.70.330:FF:001581">
    <property type="match status" value="1"/>
</dbReference>
<dbReference type="Gene3D" id="3.30.70.330">
    <property type="match status" value="1"/>
</dbReference>
<dbReference type="InterPro" id="IPR012677">
    <property type="entry name" value="Nucleotide-bd_a/b_plait_sf"/>
</dbReference>
<dbReference type="InterPro" id="IPR035979">
    <property type="entry name" value="RBD_domain_sf"/>
</dbReference>
<dbReference type="InterPro" id="IPR050825">
    <property type="entry name" value="RBM42_RBP45_47-like"/>
</dbReference>
<dbReference type="InterPro" id="IPR034215">
    <property type="entry name" value="RBM42_RRM"/>
</dbReference>
<dbReference type="InterPro" id="IPR000504">
    <property type="entry name" value="RRM_dom"/>
</dbReference>
<dbReference type="PANTHER" id="PTHR47640:SF11">
    <property type="entry name" value="RNA-BINDING PROTEIN 42"/>
    <property type="match status" value="1"/>
</dbReference>
<dbReference type="PANTHER" id="PTHR47640">
    <property type="entry name" value="TRNA SELENOCYSTEINE 1-ASSOCIATED PROTEIN 1-RELATED-RELATED"/>
    <property type="match status" value="1"/>
</dbReference>
<dbReference type="Pfam" id="PF00076">
    <property type="entry name" value="RRM_1"/>
    <property type="match status" value="1"/>
</dbReference>
<dbReference type="SMART" id="SM00360">
    <property type="entry name" value="RRM"/>
    <property type="match status" value="1"/>
</dbReference>
<dbReference type="SUPFAM" id="SSF54928">
    <property type="entry name" value="RNA-binding domain, RBD"/>
    <property type="match status" value="1"/>
</dbReference>
<dbReference type="PROSITE" id="PS50102">
    <property type="entry name" value="RRM"/>
    <property type="match status" value="1"/>
</dbReference>
<keyword id="KW-1185">Reference proteome</keyword>
<keyword id="KW-0694">RNA-binding</keyword>
<feature type="chain" id="PRO_0000082022" description="Uncharacterized RNA-binding protein C22E12.02">
    <location>
        <begin position="1"/>
        <end position="219"/>
    </location>
</feature>
<feature type="domain" description="RRM" evidence="1">
    <location>
        <begin position="30"/>
        <end position="107"/>
    </location>
</feature>
<feature type="region of interest" description="Disordered" evidence="2">
    <location>
        <begin position="140"/>
        <end position="219"/>
    </location>
</feature>
<feature type="compositionally biased region" description="Basic residues" evidence="2">
    <location>
        <begin position="140"/>
        <end position="149"/>
    </location>
</feature>
<feature type="compositionally biased region" description="Low complexity" evidence="2">
    <location>
        <begin position="150"/>
        <end position="169"/>
    </location>
</feature>
<feature type="compositionally biased region" description="Polar residues" evidence="2">
    <location>
        <begin position="176"/>
        <end position="186"/>
    </location>
</feature>
<accession>Q10355</accession>
<evidence type="ECO:0000255" key="1">
    <source>
        <dbReference type="PROSITE-ProRule" id="PRU00176"/>
    </source>
</evidence>
<evidence type="ECO:0000256" key="2">
    <source>
        <dbReference type="SAM" id="MobiDB-lite"/>
    </source>
</evidence>
<sequence length="219" mass="24410">MSRVKTTVVRKAGGQVWEDPTLLEWDPNHFRLFVGNLGNDVNDESLYQAFSEYPSLVKTKVVRDREGKTRGFGFVSFKDSDQFLKAWREKNGKYIGSRPVKLSRATSDVKPNEVNEKTIDSKIRNSLYSRTIHHGNRVQKKIKNKHGKNSSKSSRAAQSAAAELISSSSITGARPANSTSVPNAVNTEISAARATESEASRNQTKASRDYSRASSFRRV</sequence>
<gene>
    <name type="ORF">SPAC22E12.02</name>
</gene>
<protein>
    <recommendedName>
        <fullName>Uncharacterized RNA-binding protein C22E12.02</fullName>
    </recommendedName>
</protein>
<reference key="1">
    <citation type="journal article" date="2002" name="Nature">
        <title>The genome sequence of Schizosaccharomyces pombe.</title>
        <authorList>
            <person name="Wood V."/>
            <person name="Gwilliam R."/>
            <person name="Rajandream M.A."/>
            <person name="Lyne M.H."/>
            <person name="Lyne R."/>
            <person name="Stewart A."/>
            <person name="Sgouros J.G."/>
            <person name="Peat N."/>
            <person name="Hayles J."/>
            <person name="Baker S.G."/>
            <person name="Basham D."/>
            <person name="Bowman S."/>
            <person name="Brooks K."/>
            <person name="Brown D."/>
            <person name="Brown S."/>
            <person name="Chillingworth T."/>
            <person name="Churcher C.M."/>
            <person name="Collins M."/>
            <person name="Connor R."/>
            <person name="Cronin A."/>
            <person name="Davis P."/>
            <person name="Feltwell T."/>
            <person name="Fraser A."/>
            <person name="Gentles S."/>
            <person name="Goble A."/>
            <person name="Hamlin N."/>
            <person name="Harris D.E."/>
            <person name="Hidalgo J."/>
            <person name="Hodgson G."/>
            <person name="Holroyd S."/>
            <person name="Hornsby T."/>
            <person name="Howarth S."/>
            <person name="Huckle E.J."/>
            <person name="Hunt S."/>
            <person name="Jagels K."/>
            <person name="James K.D."/>
            <person name="Jones L."/>
            <person name="Jones M."/>
            <person name="Leather S."/>
            <person name="McDonald S."/>
            <person name="McLean J."/>
            <person name="Mooney P."/>
            <person name="Moule S."/>
            <person name="Mungall K.L."/>
            <person name="Murphy L.D."/>
            <person name="Niblett D."/>
            <person name="Odell C."/>
            <person name="Oliver K."/>
            <person name="O'Neil S."/>
            <person name="Pearson D."/>
            <person name="Quail M.A."/>
            <person name="Rabbinowitsch E."/>
            <person name="Rutherford K.M."/>
            <person name="Rutter S."/>
            <person name="Saunders D."/>
            <person name="Seeger K."/>
            <person name="Sharp S."/>
            <person name="Skelton J."/>
            <person name="Simmonds M.N."/>
            <person name="Squares R."/>
            <person name="Squares S."/>
            <person name="Stevens K."/>
            <person name="Taylor K."/>
            <person name="Taylor R.G."/>
            <person name="Tivey A."/>
            <person name="Walsh S.V."/>
            <person name="Warren T."/>
            <person name="Whitehead S."/>
            <person name="Woodward J.R."/>
            <person name="Volckaert G."/>
            <person name="Aert R."/>
            <person name="Robben J."/>
            <person name="Grymonprez B."/>
            <person name="Weltjens I."/>
            <person name="Vanstreels E."/>
            <person name="Rieger M."/>
            <person name="Schaefer M."/>
            <person name="Mueller-Auer S."/>
            <person name="Gabel C."/>
            <person name="Fuchs M."/>
            <person name="Duesterhoeft A."/>
            <person name="Fritzc C."/>
            <person name="Holzer E."/>
            <person name="Moestl D."/>
            <person name="Hilbert H."/>
            <person name="Borzym K."/>
            <person name="Langer I."/>
            <person name="Beck A."/>
            <person name="Lehrach H."/>
            <person name="Reinhardt R."/>
            <person name="Pohl T.M."/>
            <person name="Eger P."/>
            <person name="Zimmermann W."/>
            <person name="Wedler H."/>
            <person name="Wambutt R."/>
            <person name="Purnelle B."/>
            <person name="Goffeau A."/>
            <person name="Cadieu E."/>
            <person name="Dreano S."/>
            <person name="Gloux S."/>
            <person name="Lelaure V."/>
            <person name="Mottier S."/>
            <person name="Galibert F."/>
            <person name="Aves S.J."/>
            <person name="Xiang Z."/>
            <person name="Hunt C."/>
            <person name="Moore K."/>
            <person name="Hurst S.M."/>
            <person name="Lucas M."/>
            <person name="Rochet M."/>
            <person name="Gaillardin C."/>
            <person name="Tallada V.A."/>
            <person name="Garzon A."/>
            <person name="Thode G."/>
            <person name="Daga R.R."/>
            <person name="Cruzado L."/>
            <person name="Jimenez J."/>
            <person name="Sanchez M."/>
            <person name="del Rey F."/>
            <person name="Benito J."/>
            <person name="Dominguez A."/>
            <person name="Revuelta J.L."/>
            <person name="Moreno S."/>
            <person name="Armstrong J."/>
            <person name="Forsburg S.L."/>
            <person name="Cerutti L."/>
            <person name="Lowe T."/>
            <person name="McCombie W.R."/>
            <person name="Paulsen I."/>
            <person name="Potashkin J."/>
            <person name="Shpakovski G.V."/>
            <person name="Ussery D."/>
            <person name="Barrell B.G."/>
            <person name="Nurse P."/>
        </authorList>
    </citation>
    <scope>NUCLEOTIDE SEQUENCE [LARGE SCALE GENOMIC DNA]</scope>
    <source>
        <strain>972 / ATCC 24843</strain>
    </source>
</reference>
<organism>
    <name type="scientific">Schizosaccharomyces pombe (strain 972 / ATCC 24843)</name>
    <name type="common">Fission yeast</name>
    <dbReference type="NCBI Taxonomy" id="284812"/>
    <lineage>
        <taxon>Eukaryota</taxon>
        <taxon>Fungi</taxon>
        <taxon>Dikarya</taxon>
        <taxon>Ascomycota</taxon>
        <taxon>Taphrinomycotina</taxon>
        <taxon>Schizosaccharomycetes</taxon>
        <taxon>Schizosaccharomycetales</taxon>
        <taxon>Schizosaccharomycetaceae</taxon>
        <taxon>Schizosaccharomyces</taxon>
    </lineage>
</organism>
<proteinExistence type="predicted"/>
<name>YDB2_SCHPO</name>